<accession>Q9HZK6</accession>
<protein>
    <recommendedName>
        <fullName evidence="1">Na(+)-translocating NADH-quinone reductase subunit A</fullName>
        <shortName evidence="1">Na(+)-NQR subunit A</shortName>
        <shortName evidence="1">Na(+)-translocating NQR subunit A</shortName>
        <ecNumber evidence="1">7.2.1.1</ecNumber>
    </recommendedName>
    <alternativeName>
        <fullName evidence="1">NQR complex subunit A</fullName>
    </alternativeName>
    <alternativeName>
        <fullName evidence="1">NQR-1 subunit A</fullName>
    </alternativeName>
</protein>
<name>NQRA_PSEAE</name>
<keyword id="KW-0406">Ion transport</keyword>
<keyword id="KW-0520">NAD</keyword>
<keyword id="KW-1185">Reference proteome</keyword>
<keyword id="KW-0915">Sodium</keyword>
<keyword id="KW-0739">Sodium transport</keyword>
<keyword id="KW-1278">Translocase</keyword>
<keyword id="KW-0813">Transport</keyword>
<keyword id="KW-0830">Ubiquinone</keyword>
<dbReference type="EC" id="7.2.1.1" evidence="1"/>
<dbReference type="EMBL" id="AE004091">
    <property type="protein sequence ID" value="AAG06387.1"/>
    <property type="molecule type" value="Genomic_DNA"/>
</dbReference>
<dbReference type="PIR" id="H83272">
    <property type="entry name" value="H83272"/>
</dbReference>
<dbReference type="RefSeq" id="NP_251689.1">
    <property type="nucleotide sequence ID" value="NC_002516.2"/>
</dbReference>
<dbReference type="RefSeq" id="WP_003113983.1">
    <property type="nucleotide sequence ID" value="NZ_QZGE01000009.1"/>
</dbReference>
<dbReference type="SMR" id="Q9HZK6"/>
<dbReference type="STRING" id="208964.PA2999"/>
<dbReference type="PaxDb" id="208964-PA2999"/>
<dbReference type="DNASU" id="880558"/>
<dbReference type="GeneID" id="880558"/>
<dbReference type="KEGG" id="pae:PA2999"/>
<dbReference type="PATRIC" id="fig|208964.12.peg.3147"/>
<dbReference type="PseudoCAP" id="PA2999"/>
<dbReference type="HOGENOM" id="CLU_046656_0_0_6"/>
<dbReference type="InParanoid" id="Q9HZK6"/>
<dbReference type="OrthoDB" id="9774536at2"/>
<dbReference type="PhylomeDB" id="Q9HZK6"/>
<dbReference type="BioCyc" id="PAER208964:G1FZ6-3051-MONOMER"/>
<dbReference type="PHI-base" id="PHI:8945"/>
<dbReference type="Proteomes" id="UP000002438">
    <property type="component" value="Chromosome"/>
</dbReference>
<dbReference type="GO" id="GO:0016655">
    <property type="term" value="F:oxidoreductase activity, acting on NAD(P)H, quinone or similar compound as acceptor"/>
    <property type="evidence" value="ECO:0007669"/>
    <property type="project" value="UniProtKB-UniRule"/>
</dbReference>
<dbReference type="GO" id="GO:0006814">
    <property type="term" value="P:sodium ion transport"/>
    <property type="evidence" value="ECO:0007669"/>
    <property type="project" value="UniProtKB-UniRule"/>
</dbReference>
<dbReference type="HAMAP" id="MF_00425">
    <property type="entry name" value="NqrA"/>
    <property type="match status" value="1"/>
</dbReference>
<dbReference type="InterPro" id="IPR008703">
    <property type="entry name" value="NqrA"/>
</dbReference>
<dbReference type="InterPro" id="IPR056148">
    <property type="entry name" value="NQRA_2nd"/>
</dbReference>
<dbReference type="InterPro" id="IPR022615">
    <property type="entry name" value="NqrA_C_domain"/>
</dbReference>
<dbReference type="InterPro" id="IPR056147">
    <property type="entry name" value="NQRA_N"/>
</dbReference>
<dbReference type="NCBIfam" id="TIGR01936">
    <property type="entry name" value="nqrA"/>
    <property type="match status" value="1"/>
</dbReference>
<dbReference type="NCBIfam" id="NF003759">
    <property type="entry name" value="PRK05352.1-2"/>
    <property type="match status" value="1"/>
</dbReference>
<dbReference type="PANTHER" id="PTHR37839">
    <property type="entry name" value="NA(+)-TRANSLOCATING NADH-QUINONE REDUCTASE SUBUNIT A"/>
    <property type="match status" value="1"/>
</dbReference>
<dbReference type="PANTHER" id="PTHR37839:SF1">
    <property type="entry name" value="NA(+)-TRANSLOCATING NADH-QUINONE REDUCTASE SUBUNIT A"/>
    <property type="match status" value="1"/>
</dbReference>
<dbReference type="Pfam" id="PF24836">
    <property type="entry name" value="NQRA_2nd"/>
    <property type="match status" value="1"/>
</dbReference>
<dbReference type="Pfam" id="PF05896">
    <property type="entry name" value="NQRA_N"/>
    <property type="match status" value="1"/>
</dbReference>
<dbReference type="Pfam" id="PF11973">
    <property type="entry name" value="NQRA_SLBB"/>
    <property type="match status" value="1"/>
</dbReference>
<proteinExistence type="inferred from homology"/>
<organism>
    <name type="scientific">Pseudomonas aeruginosa (strain ATCC 15692 / DSM 22644 / CIP 104116 / JCM 14847 / LMG 12228 / 1C / PRS 101 / PAO1)</name>
    <dbReference type="NCBI Taxonomy" id="208964"/>
    <lineage>
        <taxon>Bacteria</taxon>
        <taxon>Pseudomonadati</taxon>
        <taxon>Pseudomonadota</taxon>
        <taxon>Gammaproteobacteria</taxon>
        <taxon>Pseudomonadales</taxon>
        <taxon>Pseudomonadaceae</taxon>
        <taxon>Pseudomonas</taxon>
    </lineage>
</organism>
<gene>
    <name evidence="1" type="primary">nqrA</name>
    <name type="ordered locus">PA2999</name>
</gene>
<evidence type="ECO:0000255" key="1">
    <source>
        <dbReference type="HAMAP-Rule" id="MF_00425"/>
    </source>
</evidence>
<feature type="chain" id="PRO_0000214202" description="Na(+)-translocating NADH-quinone reductase subunit A">
    <location>
        <begin position="1"/>
        <end position="445"/>
    </location>
</feature>
<comment type="function">
    <text evidence="1">NQR complex catalyzes the reduction of ubiquinone-1 to ubiquinol by two successive reactions, coupled with the transport of Na(+) ions from the cytoplasm to the periplasm. NqrA to NqrE are probably involved in the second step, the conversion of ubisemiquinone to ubiquinol.</text>
</comment>
<comment type="catalytic activity">
    <reaction evidence="1">
        <text>a ubiquinone + n Na(+)(in) + NADH + H(+) = a ubiquinol + n Na(+)(out) + NAD(+)</text>
        <dbReference type="Rhea" id="RHEA:47748"/>
        <dbReference type="Rhea" id="RHEA-COMP:9565"/>
        <dbReference type="Rhea" id="RHEA-COMP:9566"/>
        <dbReference type="ChEBI" id="CHEBI:15378"/>
        <dbReference type="ChEBI" id="CHEBI:16389"/>
        <dbReference type="ChEBI" id="CHEBI:17976"/>
        <dbReference type="ChEBI" id="CHEBI:29101"/>
        <dbReference type="ChEBI" id="CHEBI:57540"/>
        <dbReference type="ChEBI" id="CHEBI:57945"/>
        <dbReference type="EC" id="7.2.1.1"/>
    </reaction>
</comment>
<comment type="subunit">
    <text evidence="1">Composed of six subunits; NqrA, NqrB, NqrC, NqrD, NqrE and NqrF.</text>
</comment>
<comment type="similarity">
    <text evidence="1">Belongs to the NqrA family.</text>
</comment>
<sequence>MIKIKRGLDLPISGAPEQRIEAARPVRSVALIGFDYHGMKPTMAVQVGDRVKLGQVLFTDKKNPSVSYTAPGAGVVSAIHRGEKRVLQSVVIDLDGDEQLEFARYPADKLATLSAEQVRDNLLQSGLWTALRTRPFSKVPDPESSPSSIFVTAIDTQPLAADPQVVIAEQGEAFQAGLTVLGRLARVFLCKAEGVSLPGEALSGVTAQAFSGPHPAGLPGTHIHFLDPVGAGKSVWNLNYQDVIAIGKLFTTGQLWTERVIALAGPVVEKPRLVRTRLGANLDELAAGQLQPGNNRLISGSVLGGRTAHGAYAYLGRYHLQLSCLKEGDQREFLHYLRAGVEKHSLLNVFVSRLLGGKRFAFTTSTNGSPRAMVPVGNYEAVMPLDILPTQLLRYLIVGDTEMAQKLGALELDEEDLALCSYVCAGKYEYGPILRDNLARIEQEG</sequence>
<reference key="1">
    <citation type="journal article" date="2000" name="Nature">
        <title>Complete genome sequence of Pseudomonas aeruginosa PAO1, an opportunistic pathogen.</title>
        <authorList>
            <person name="Stover C.K."/>
            <person name="Pham X.-Q.T."/>
            <person name="Erwin A.L."/>
            <person name="Mizoguchi S.D."/>
            <person name="Warrener P."/>
            <person name="Hickey M.J."/>
            <person name="Brinkman F.S.L."/>
            <person name="Hufnagle W.O."/>
            <person name="Kowalik D.J."/>
            <person name="Lagrou M."/>
            <person name="Garber R.L."/>
            <person name="Goltry L."/>
            <person name="Tolentino E."/>
            <person name="Westbrock-Wadman S."/>
            <person name="Yuan Y."/>
            <person name="Brody L.L."/>
            <person name="Coulter S.N."/>
            <person name="Folger K.R."/>
            <person name="Kas A."/>
            <person name="Larbig K."/>
            <person name="Lim R.M."/>
            <person name="Smith K.A."/>
            <person name="Spencer D.H."/>
            <person name="Wong G.K.-S."/>
            <person name="Wu Z."/>
            <person name="Paulsen I.T."/>
            <person name="Reizer J."/>
            <person name="Saier M.H. Jr."/>
            <person name="Hancock R.E.W."/>
            <person name="Lory S."/>
            <person name="Olson M.V."/>
        </authorList>
    </citation>
    <scope>NUCLEOTIDE SEQUENCE [LARGE SCALE GENOMIC DNA]</scope>
    <source>
        <strain>ATCC 15692 / DSM 22644 / CIP 104116 / JCM 14847 / LMG 12228 / 1C / PRS 101 / PAO1</strain>
    </source>
</reference>